<accession>P67173</accession>
<accession>Q8FYY9</accession>
<accession>Q8YIW8</accession>
<reference key="1">
    <citation type="journal article" date="2002" name="Proc. Natl. Acad. Sci. U.S.A.">
        <title>The genome sequence of the facultative intracellular pathogen Brucella melitensis.</title>
        <authorList>
            <person name="DelVecchio V.G."/>
            <person name="Kapatral V."/>
            <person name="Redkar R.J."/>
            <person name="Patra G."/>
            <person name="Mujer C."/>
            <person name="Los T."/>
            <person name="Ivanova N."/>
            <person name="Anderson I."/>
            <person name="Bhattacharyya A."/>
            <person name="Lykidis A."/>
            <person name="Reznik G."/>
            <person name="Jablonski L."/>
            <person name="Larsen N."/>
            <person name="D'Souza M."/>
            <person name="Bernal A."/>
            <person name="Mazur M."/>
            <person name="Goltsman E."/>
            <person name="Selkov E."/>
            <person name="Elzer P.H."/>
            <person name="Hagius S."/>
            <person name="O'Callaghan D."/>
            <person name="Letesson J.-J."/>
            <person name="Haselkorn R."/>
            <person name="Kyrpides N.C."/>
            <person name="Overbeek R."/>
        </authorList>
    </citation>
    <scope>NUCLEOTIDE SEQUENCE [LARGE SCALE GENOMIC DNA]</scope>
    <source>
        <strain>ATCC 23456 / CCUG 17765 / NCTC 10094 / 16M</strain>
    </source>
</reference>
<sequence>MAGHSQFKNIMHRKGRQDAVRSKMFSKLAREITVAAKQGLPDPAMNPRLRLAIQNAKAQSMPKDNIERAIKKAAGNDGENYDEVRYEGRGPGGVSVIVEALTDNRNRTASNVRAAFTKSGGSLGETGSVSFMFDRVGEIVYKPEAGDADKVMEAAIEAGAEDVQSGEDGHVILCAFEDIGEVSKALEAALGEAESIKTIWKPQTNTELDEEKARSVLKLLSVLEDDDDVQNVYTNFEVSDEVMEKLSA</sequence>
<keyword id="KW-0963">Cytoplasm</keyword>
<keyword id="KW-0238">DNA-binding</keyword>
<keyword id="KW-0804">Transcription</keyword>
<keyword id="KW-0805">Transcription regulation</keyword>
<protein>
    <recommendedName>
        <fullName evidence="1">Probable transcriptional regulatory protein BMEI0321</fullName>
    </recommendedName>
</protein>
<evidence type="ECO:0000255" key="1">
    <source>
        <dbReference type="HAMAP-Rule" id="MF_00693"/>
    </source>
</evidence>
<evidence type="ECO:0000305" key="2"/>
<organism>
    <name type="scientific">Brucella melitensis biotype 1 (strain ATCC 23456 / CCUG 17765 / NCTC 10094 / 16M)</name>
    <dbReference type="NCBI Taxonomy" id="224914"/>
    <lineage>
        <taxon>Bacteria</taxon>
        <taxon>Pseudomonadati</taxon>
        <taxon>Pseudomonadota</taxon>
        <taxon>Alphaproteobacteria</taxon>
        <taxon>Hyphomicrobiales</taxon>
        <taxon>Brucellaceae</taxon>
        <taxon>Brucella/Ochrobactrum group</taxon>
        <taxon>Brucella</taxon>
    </lineage>
</organism>
<name>Y321_BRUME</name>
<proteinExistence type="inferred from homology"/>
<gene>
    <name type="ordered locus">BMEI0321</name>
</gene>
<dbReference type="EMBL" id="AE008917">
    <property type="protein sequence ID" value="AAL51502.1"/>
    <property type="status" value="ALT_INIT"/>
    <property type="molecule type" value="Genomic_DNA"/>
</dbReference>
<dbReference type="PIR" id="AC3292">
    <property type="entry name" value="AC3292"/>
</dbReference>
<dbReference type="RefSeq" id="WP_002964805.1">
    <property type="nucleotide sequence ID" value="NZ_GG703781.1"/>
</dbReference>
<dbReference type="SMR" id="P67173"/>
<dbReference type="KEGG" id="bme:BMEI0321"/>
<dbReference type="KEGG" id="bmel:DK63_1113"/>
<dbReference type="PATRIC" id="fig|224914.52.peg.1172"/>
<dbReference type="eggNOG" id="COG0217">
    <property type="taxonomic scope" value="Bacteria"/>
</dbReference>
<dbReference type="PhylomeDB" id="P67173"/>
<dbReference type="Proteomes" id="UP000000419">
    <property type="component" value="Chromosome I"/>
</dbReference>
<dbReference type="GO" id="GO:0005829">
    <property type="term" value="C:cytosol"/>
    <property type="evidence" value="ECO:0007669"/>
    <property type="project" value="TreeGrafter"/>
</dbReference>
<dbReference type="GO" id="GO:0003677">
    <property type="term" value="F:DNA binding"/>
    <property type="evidence" value="ECO:0007669"/>
    <property type="project" value="UniProtKB-UniRule"/>
</dbReference>
<dbReference type="GO" id="GO:0006355">
    <property type="term" value="P:regulation of DNA-templated transcription"/>
    <property type="evidence" value="ECO:0007669"/>
    <property type="project" value="UniProtKB-UniRule"/>
</dbReference>
<dbReference type="FunFam" id="1.10.10.200:FF:000002">
    <property type="entry name" value="Probable transcriptional regulatory protein CLM62_37755"/>
    <property type="match status" value="1"/>
</dbReference>
<dbReference type="Gene3D" id="1.10.10.200">
    <property type="match status" value="1"/>
</dbReference>
<dbReference type="Gene3D" id="3.30.70.980">
    <property type="match status" value="2"/>
</dbReference>
<dbReference type="HAMAP" id="MF_00693">
    <property type="entry name" value="Transcrip_reg_TACO1"/>
    <property type="match status" value="1"/>
</dbReference>
<dbReference type="InterPro" id="IPR017856">
    <property type="entry name" value="Integrase-like_N"/>
</dbReference>
<dbReference type="InterPro" id="IPR048300">
    <property type="entry name" value="TACO1_YebC-like_2nd/3rd_dom"/>
</dbReference>
<dbReference type="InterPro" id="IPR049083">
    <property type="entry name" value="TACO1_YebC_N"/>
</dbReference>
<dbReference type="InterPro" id="IPR002876">
    <property type="entry name" value="Transcrip_reg_TACO1-like"/>
</dbReference>
<dbReference type="InterPro" id="IPR026564">
    <property type="entry name" value="Transcrip_reg_TACO1-like_dom3"/>
</dbReference>
<dbReference type="InterPro" id="IPR029072">
    <property type="entry name" value="YebC-like"/>
</dbReference>
<dbReference type="NCBIfam" id="NF001030">
    <property type="entry name" value="PRK00110.1"/>
    <property type="match status" value="1"/>
</dbReference>
<dbReference type="NCBIfam" id="NF009044">
    <property type="entry name" value="PRK12378.1"/>
    <property type="match status" value="1"/>
</dbReference>
<dbReference type="NCBIfam" id="TIGR01033">
    <property type="entry name" value="YebC/PmpR family DNA-binding transcriptional regulator"/>
    <property type="match status" value="1"/>
</dbReference>
<dbReference type="PANTHER" id="PTHR12532:SF6">
    <property type="entry name" value="TRANSCRIPTIONAL REGULATORY PROTEIN YEBC-RELATED"/>
    <property type="match status" value="1"/>
</dbReference>
<dbReference type="PANTHER" id="PTHR12532">
    <property type="entry name" value="TRANSLATIONAL ACTIVATOR OF CYTOCHROME C OXIDASE 1"/>
    <property type="match status" value="1"/>
</dbReference>
<dbReference type="Pfam" id="PF20772">
    <property type="entry name" value="TACO1_YebC_N"/>
    <property type="match status" value="1"/>
</dbReference>
<dbReference type="Pfam" id="PF01709">
    <property type="entry name" value="Transcrip_reg"/>
    <property type="match status" value="1"/>
</dbReference>
<dbReference type="SUPFAM" id="SSF75625">
    <property type="entry name" value="YebC-like"/>
    <property type="match status" value="1"/>
</dbReference>
<comment type="subcellular location">
    <subcellularLocation>
        <location evidence="1">Cytoplasm</location>
    </subcellularLocation>
</comment>
<comment type="similarity">
    <text evidence="1">Belongs to the TACO1 family.</text>
</comment>
<comment type="sequence caution" evidence="2">
    <conflict type="erroneous initiation">
        <sequence resource="EMBL-CDS" id="AAL51502"/>
    </conflict>
</comment>
<feature type="chain" id="PRO_0000175775" description="Probable transcriptional regulatory protein BMEI0321">
    <location>
        <begin position="1"/>
        <end position="248"/>
    </location>
</feature>